<proteinExistence type="evidence at protein level"/>
<name>CKS2_ARATH</name>
<gene>
    <name type="primary">CKS2</name>
    <name type="ordered locus">At2g27970</name>
    <name type="ORF">T1E2.11</name>
</gene>
<keyword id="KW-0131">Cell cycle</keyword>
<keyword id="KW-0132">Cell division</keyword>
<keyword id="KW-1185">Reference proteome</keyword>
<feature type="chain" id="PRO_0000294095" description="Cyclin-dependent kinases regulatory subunit 2">
    <location>
        <begin position="1"/>
        <end position="83"/>
    </location>
</feature>
<evidence type="ECO:0000250" key="1"/>
<evidence type="ECO:0000269" key="2">
    <source>
    </source>
</evidence>
<evidence type="ECO:0000305" key="3"/>
<dbReference type="EMBL" id="AC006929">
    <property type="protein sequence ID" value="AAD21505.1"/>
    <property type="molecule type" value="Genomic_DNA"/>
</dbReference>
<dbReference type="EMBL" id="CP002685">
    <property type="protein sequence ID" value="AEC08065.1"/>
    <property type="molecule type" value="Genomic_DNA"/>
</dbReference>
<dbReference type="EMBL" id="BT010784">
    <property type="protein sequence ID" value="AAR24151.1"/>
    <property type="molecule type" value="mRNA"/>
</dbReference>
<dbReference type="EMBL" id="BT011257">
    <property type="protein sequence ID" value="AAR92293.1"/>
    <property type="molecule type" value="mRNA"/>
</dbReference>
<dbReference type="PIR" id="B84679">
    <property type="entry name" value="B84679"/>
</dbReference>
<dbReference type="RefSeq" id="NP_180364.1">
    <property type="nucleotide sequence ID" value="NM_128356.6"/>
</dbReference>
<dbReference type="SMR" id="Q9SJJ5"/>
<dbReference type="BioGRID" id="2691">
    <property type="interactions" value="50"/>
</dbReference>
<dbReference type="FunCoup" id="Q9SJJ5">
    <property type="interactions" value="2185"/>
</dbReference>
<dbReference type="IntAct" id="Q9SJJ5">
    <property type="interactions" value="35"/>
</dbReference>
<dbReference type="STRING" id="3702.Q9SJJ5"/>
<dbReference type="PaxDb" id="3702-AT2G27970.1"/>
<dbReference type="ProteomicsDB" id="222091"/>
<dbReference type="EnsemblPlants" id="AT2G27970.1">
    <property type="protein sequence ID" value="AT2G27970.1"/>
    <property type="gene ID" value="AT2G27970"/>
</dbReference>
<dbReference type="GeneID" id="817341"/>
<dbReference type="Gramene" id="AT2G27970.1">
    <property type="protein sequence ID" value="AT2G27970.1"/>
    <property type="gene ID" value="AT2G27970"/>
</dbReference>
<dbReference type="KEGG" id="ath:AT2G27970"/>
<dbReference type="Araport" id="AT2G27970"/>
<dbReference type="TAIR" id="AT2G27970">
    <property type="gene designation" value="CKS2"/>
</dbReference>
<dbReference type="eggNOG" id="KOG3484">
    <property type="taxonomic scope" value="Eukaryota"/>
</dbReference>
<dbReference type="HOGENOM" id="CLU_140546_2_0_1"/>
<dbReference type="InParanoid" id="Q9SJJ5"/>
<dbReference type="OMA" id="MHEPEPH"/>
<dbReference type="OrthoDB" id="440676at2759"/>
<dbReference type="PhylomeDB" id="Q9SJJ5"/>
<dbReference type="PRO" id="PR:Q9SJJ5"/>
<dbReference type="Proteomes" id="UP000006548">
    <property type="component" value="Chromosome 2"/>
</dbReference>
<dbReference type="ExpressionAtlas" id="Q9SJJ5">
    <property type="expression patterns" value="baseline and differential"/>
</dbReference>
<dbReference type="GO" id="GO:0005737">
    <property type="term" value="C:cytoplasm"/>
    <property type="evidence" value="ECO:0000314"/>
    <property type="project" value="TAIR"/>
</dbReference>
<dbReference type="GO" id="GO:0005634">
    <property type="term" value="C:nucleus"/>
    <property type="evidence" value="ECO:0000314"/>
    <property type="project" value="TAIR"/>
</dbReference>
<dbReference type="GO" id="GO:0016538">
    <property type="term" value="F:cyclin-dependent protein serine/threonine kinase regulator activity"/>
    <property type="evidence" value="ECO:0007669"/>
    <property type="project" value="InterPro"/>
</dbReference>
<dbReference type="GO" id="GO:0051301">
    <property type="term" value="P:cell division"/>
    <property type="evidence" value="ECO:0007669"/>
    <property type="project" value="UniProtKB-KW"/>
</dbReference>
<dbReference type="FunFam" id="3.30.170.10:FF:000003">
    <property type="entry name" value="Cyclin-dependent kinases regulatory subunit"/>
    <property type="match status" value="1"/>
</dbReference>
<dbReference type="Gene3D" id="3.30.170.10">
    <property type="entry name" value="Cyclin-dependent kinase, regulatory subunit"/>
    <property type="match status" value="1"/>
</dbReference>
<dbReference type="InterPro" id="IPR000789">
    <property type="entry name" value="Cyclin-dep_kinase_reg-sub"/>
</dbReference>
<dbReference type="InterPro" id="IPR036858">
    <property type="entry name" value="Cyclin-dep_kinase_reg-sub_sf"/>
</dbReference>
<dbReference type="PANTHER" id="PTHR23415">
    <property type="entry name" value="CYCLIN-DEPENDENT KINASES REGULATORY SUBUNIT/60S RIBOSOME SUBUNIT BIOGENESIS PROTEIN NIP7"/>
    <property type="match status" value="1"/>
</dbReference>
<dbReference type="Pfam" id="PF01111">
    <property type="entry name" value="CKS"/>
    <property type="match status" value="1"/>
</dbReference>
<dbReference type="PRINTS" id="PR00296">
    <property type="entry name" value="CYCLINKINASE"/>
</dbReference>
<dbReference type="SMART" id="SM01084">
    <property type="entry name" value="CKS"/>
    <property type="match status" value="1"/>
</dbReference>
<dbReference type="SUPFAM" id="SSF55637">
    <property type="entry name" value="Cell cycle regulatory proteins"/>
    <property type="match status" value="1"/>
</dbReference>
<dbReference type="PROSITE" id="PS00944">
    <property type="entry name" value="CKS_1"/>
    <property type="match status" value="1"/>
</dbReference>
<protein>
    <recommendedName>
        <fullName>Cyclin-dependent kinases regulatory subunit 2</fullName>
    </recommendedName>
</protein>
<organism>
    <name type="scientific">Arabidopsis thaliana</name>
    <name type="common">Mouse-ear cress</name>
    <dbReference type="NCBI Taxonomy" id="3702"/>
    <lineage>
        <taxon>Eukaryota</taxon>
        <taxon>Viridiplantae</taxon>
        <taxon>Streptophyta</taxon>
        <taxon>Embryophyta</taxon>
        <taxon>Tracheophyta</taxon>
        <taxon>Spermatophyta</taxon>
        <taxon>Magnoliopsida</taxon>
        <taxon>eudicotyledons</taxon>
        <taxon>Gunneridae</taxon>
        <taxon>Pentapetalae</taxon>
        <taxon>rosids</taxon>
        <taxon>malvids</taxon>
        <taxon>Brassicales</taxon>
        <taxon>Brassicaceae</taxon>
        <taxon>Camelineae</taxon>
        <taxon>Arabidopsis</taxon>
    </lineage>
</organism>
<accession>Q9SJJ5</accession>
<sequence length="83" mass="9987">MGQIQYSDKYFDDTFEYRHVVLPPEVAKLLPKNRILSESEWRAIGVQQSRGWVHYAIHRPEPHIMLFRRPLNYQQEHQAQIAK</sequence>
<comment type="function">
    <text evidence="1">Binds to the catalytic subunit of the cyclin dependent kinases and is essential for their biological function.</text>
</comment>
<comment type="subunit">
    <text evidence="2">Interacts with CDKA-1, CYCD2-1 and AT4G14310.</text>
</comment>
<comment type="similarity">
    <text evidence="3">Belongs to the CKS family.</text>
</comment>
<reference key="1">
    <citation type="journal article" date="1999" name="Nature">
        <title>Sequence and analysis of chromosome 2 of the plant Arabidopsis thaliana.</title>
        <authorList>
            <person name="Lin X."/>
            <person name="Kaul S."/>
            <person name="Rounsley S.D."/>
            <person name="Shea T.P."/>
            <person name="Benito M.-I."/>
            <person name="Town C.D."/>
            <person name="Fujii C.Y."/>
            <person name="Mason T.M."/>
            <person name="Bowman C.L."/>
            <person name="Barnstead M.E."/>
            <person name="Feldblyum T.V."/>
            <person name="Buell C.R."/>
            <person name="Ketchum K.A."/>
            <person name="Lee J.J."/>
            <person name="Ronning C.M."/>
            <person name="Koo H.L."/>
            <person name="Moffat K.S."/>
            <person name="Cronin L.A."/>
            <person name="Shen M."/>
            <person name="Pai G."/>
            <person name="Van Aken S."/>
            <person name="Umayam L."/>
            <person name="Tallon L.J."/>
            <person name="Gill J.E."/>
            <person name="Adams M.D."/>
            <person name="Carrera A.J."/>
            <person name="Creasy T.H."/>
            <person name="Goodman H.M."/>
            <person name="Somerville C.R."/>
            <person name="Copenhaver G.P."/>
            <person name="Preuss D."/>
            <person name="Nierman W.C."/>
            <person name="White O."/>
            <person name="Eisen J.A."/>
            <person name="Salzberg S.L."/>
            <person name="Fraser C.M."/>
            <person name="Venter J.C."/>
        </authorList>
    </citation>
    <scope>NUCLEOTIDE SEQUENCE [LARGE SCALE GENOMIC DNA]</scope>
    <source>
        <strain>cv. Columbia</strain>
    </source>
</reference>
<reference key="2">
    <citation type="journal article" date="2017" name="Plant J.">
        <title>Araport11: a complete reannotation of the Arabidopsis thaliana reference genome.</title>
        <authorList>
            <person name="Cheng C.Y."/>
            <person name="Krishnakumar V."/>
            <person name="Chan A.P."/>
            <person name="Thibaud-Nissen F."/>
            <person name="Schobel S."/>
            <person name="Town C.D."/>
        </authorList>
    </citation>
    <scope>GENOME REANNOTATION</scope>
    <source>
        <strain>cv. Columbia</strain>
    </source>
</reference>
<reference key="3">
    <citation type="submission" date="2004-01" db="EMBL/GenBank/DDBJ databases">
        <authorList>
            <person name="Cheuk R.F."/>
            <person name="Chen H."/>
            <person name="Kim C.J."/>
            <person name="Shinn P."/>
            <person name="Ecker J.R."/>
        </authorList>
    </citation>
    <scope>NUCLEOTIDE SEQUENCE [LARGE SCALE MRNA]</scope>
    <source>
        <strain>cv. Columbia</strain>
    </source>
</reference>
<reference key="4">
    <citation type="journal article" date="2002" name="Plant Cell">
        <title>Genome-wide analysis of core cell cycle genes in Arabidopsis.</title>
        <authorList>
            <person name="Vandepoele K."/>
            <person name="Raes J."/>
            <person name="de Veylder L."/>
            <person name="Rouze P."/>
            <person name="Rombauts S."/>
            <person name="Inze D."/>
        </authorList>
    </citation>
    <scope>GENE FAMILY</scope>
    <scope>NOMENCLATURE</scope>
</reference>
<reference key="5">
    <citation type="journal article" date="2010" name="Mol. Syst. Biol.">
        <title>Targeted interactomics reveals a complex core cell cycle machinery in Arabidopsis thaliana.</title>
        <authorList>
            <person name="Van Leene J."/>
            <person name="Hollunder J."/>
            <person name="Eeckhout D."/>
            <person name="Persiau G."/>
            <person name="Van De Slijke E."/>
            <person name="Stals H."/>
            <person name="Van Isterdael G."/>
            <person name="Verkest A."/>
            <person name="Neirynck S."/>
            <person name="Buffel Y."/>
            <person name="De Bodt S."/>
            <person name="Maere S."/>
            <person name="Laukens K."/>
            <person name="Pharazyn A."/>
            <person name="Ferreira P.C.G."/>
            <person name="Eloy N."/>
            <person name="Renne C."/>
            <person name="Meyer C."/>
            <person name="Faure J.-D."/>
            <person name="Steinbrenner J."/>
            <person name="Beynon J."/>
            <person name="Larkin J.C."/>
            <person name="Van de Peer Y."/>
            <person name="Hilson P."/>
            <person name="Kuiper M."/>
            <person name="De Veylder L."/>
            <person name="Van Onckelen H."/>
            <person name="Inze D."/>
            <person name="Witters E."/>
            <person name="De Jaeger G."/>
        </authorList>
    </citation>
    <scope>INTERACTION WITH CDKA-1; CYCD2-1 AND AT4G14310</scope>
</reference>